<protein>
    <recommendedName>
        <fullName>Serralysin G</fullName>
        <ecNumber>3.4.24.40</ecNumber>
    </recommendedName>
    <alternativeName>
        <fullName>Secreted protease G</fullName>
        <shortName>ProG</shortName>
    </alternativeName>
</protein>
<evidence type="ECO:0000250" key="1"/>
<evidence type="ECO:0000255" key="2">
    <source>
        <dbReference type="PROSITE-ProRule" id="PRU10095"/>
    </source>
</evidence>
<evidence type="ECO:0000269" key="3">
    <source>
    </source>
</evidence>
<evidence type="ECO:0000305" key="4"/>
<name>PRTG_DICCH</name>
<sequence>MALYGKKTDLSSASSGGYTGVADVYQLWHYHARGNGNIGDKPSYTLEQARDQITRGNITWNGEKVFGKSAALTYSFLQSVADSDMPDNFKGFVKFNAAQIQQTKLALQSWADVANVTFSEAKDGERATIQFGNYTLTPDGNTDNNSQAFGFYPGNWKWAGSAWFNYNQADNQRPDINEFGRNTLTHEIGHTLGLYHPGDYDASDGNPGYKDVTYAEDTRQFSIMSYWNEGYTGGDFHGYHAAAPHDIAAIQKLYGANMSTRTGDTVYGFHSNSGRDFYTATDSKTPLIFSVWDAGGNDTFDFSGYSANQRISLISGTFSDVGGLKAMVSIAAGAVIENAIGGSGHDVIVGNLSDNRIDGGAGNDVLYGDGGADILTGGAGKDIFVYAWEKDSLSSAPDTITDFQRGEDRIDLSAFNKNHDLRFVDNFSGKGNEVVLNWDSQSHQTNMWLHLSGHETADFLVNIVGAALQPSDVIV</sequence>
<accession>Q07162</accession>
<dbReference type="EC" id="3.4.24.40"/>
<dbReference type="EMBL" id="X71365">
    <property type="protein sequence ID" value="CAA50501.1"/>
    <property type="molecule type" value="Genomic_DNA"/>
</dbReference>
<dbReference type="PIR" id="S48132">
    <property type="entry name" value="S48132"/>
</dbReference>
<dbReference type="SMR" id="Q07162"/>
<dbReference type="MEROPS" id="M10.055"/>
<dbReference type="GO" id="GO:0031012">
    <property type="term" value="C:extracellular matrix"/>
    <property type="evidence" value="ECO:0007669"/>
    <property type="project" value="InterPro"/>
</dbReference>
<dbReference type="GO" id="GO:0005615">
    <property type="term" value="C:extracellular space"/>
    <property type="evidence" value="ECO:0007669"/>
    <property type="project" value="InterPro"/>
</dbReference>
<dbReference type="GO" id="GO:0005509">
    <property type="term" value="F:calcium ion binding"/>
    <property type="evidence" value="ECO:0007669"/>
    <property type="project" value="InterPro"/>
</dbReference>
<dbReference type="GO" id="GO:0004222">
    <property type="term" value="F:metalloendopeptidase activity"/>
    <property type="evidence" value="ECO:0007669"/>
    <property type="project" value="InterPro"/>
</dbReference>
<dbReference type="GO" id="GO:0008270">
    <property type="term" value="F:zinc ion binding"/>
    <property type="evidence" value="ECO:0007669"/>
    <property type="project" value="InterPro"/>
</dbReference>
<dbReference type="GO" id="GO:0006508">
    <property type="term" value="P:proteolysis"/>
    <property type="evidence" value="ECO:0007669"/>
    <property type="project" value="UniProtKB-KW"/>
</dbReference>
<dbReference type="CDD" id="cd04277">
    <property type="entry name" value="ZnMc_serralysin_like"/>
    <property type="match status" value="1"/>
</dbReference>
<dbReference type="Gene3D" id="3.40.390.10">
    <property type="entry name" value="Collagenase (Catalytic Domain)"/>
    <property type="match status" value="1"/>
</dbReference>
<dbReference type="Gene3D" id="2.150.10.10">
    <property type="entry name" value="Serralysin-like metalloprotease, C-terminal"/>
    <property type="match status" value="1"/>
</dbReference>
<dbReference type="InterPro" id="IPR018511">
    <property type="entry name" value="Hemolysin-typ_Ca-bd_CS"/>
</dbReference>
<dbReference type="InterPro" id="IPR001343">
    <property type="entry name" value="Hemolysn_Ca-bd"/>
</dbReference>
<dbReference type="InterPro" id="IPR024079">
    <property type="entry name" value="MetalloPept_cat_dom_sf"/>
</dbReference>
<dbReference type="InterPro" id="IPR001818">
    <property type="entry name" value="Pept_M10_metallopeptidase"/>
</dbReference>
<dbReference type="InterPro" id="IPR016294">
    <property type="entry name" value="Pept_M10B"/>
</dbReference>
<dbReference type="InterPro" id="IPR013858">
    <property type="entry name" value="Peptidase_M10B_C"/>
</dbReference>
<dbReference type="InterPro" id="IPR006026">
    <property type="entry name" value="Peptidase_Metallo"/>
</dbReference>
<dbReference type="InterPro" id="IPR034033">
    <property type="entry name" value="Serralysin-like"/>
</dbReference>
<dbReference type="InterPro" id="IPR011049">
    <property type="entry name" value="Serralysin-like_metalloprot_C"/>
</dbReference>
<dbReference type="NCBIfam" id="NF035945">
    <property type="entry name" value="Zn_serralysin"/>
    <property type="match status" value="1"/>
</dbReference>
<dbReference type="Pfam" id="PF00353">
    <property type="entry name" value="HemolysinCabind"/>
    <property type="match status" value="1"/>
</dbReference>
<dbReference type="Pfam" id="PF00413">
    <property type="entry name" value="Peptidase_M10"/>
    <property type="match status" value="1"/>
</dbReference>
<dbReference type="Pfam" id="PF08548">
    <property type="entry name" value="Peptidase_M10_C"/>
    <property type="match status" value="1"/>
</dbReference>
<dbReference type="PIRSF" id="PIRSF001205">
    <property type="entry name" value="Peptidase_M10B"/>
    <property type="match status" value="1"/>
</dbReference>
<dbReference type="PRINTS" id="PR00313">
    <property type="entry name" value="CABNDNGRPT"/>
</dbReference>
<dbReference type="SMART" id="SM00235">
    <property type="entry name" value="ZnMc"/>
    <property type="match status" value="1"/>
</dbReference>
<dbReference type="SUPFAM" id="SSF51120">
    <property type="entry name" value="beta-Roll"/>
    <property type="match status" value="1"/>
</dbReference>
<dbReference type="SUPFAM" id="SSF55486">
    <property type="entry name" value="Metalloproteases ('zincins'), catalytic domain"/>
    <property type="match status" value="1"/>
</dbReference>
<dbReference type="PROSITE" id="PS00330">
    <property type="entry name" value="HEMOLYSIN_CALCIUM"/>
    <property type="match status" value="1"/>
</dbReference>
<dbReference type="PROSITE" id="PS00142">
    <property type="entry name" value="ZINC_PROTEASE"/>
    <property type="match status" value="1"/>
</dbReference>
<organism>
    <name type="scientific">Dickeya chrysanthemi</name>
    <name type="common">Pectobacterium chrysanthemi</name>
    <name type="synonym">Erwinia chrysanthemi</name>
    <dbReference type="NCBI Taxonomy" id="556"/>
    <lineage>
        <taxon>Bacteria</taxon>
        <taxon>Pseudomonadati</taxon>
        <taxon>Pseudomonadota</taxon>
        <taxon>Gammaproteobacteria</taxon>
        <taxon>Enterobacterales</taxon>
        <taxon>Pectobacteriaceae</taxon>
        <taxon>Dickeya</taxon>
    </lineage>
</organism>
<keyword id="KW-0106">Calcium</keyword>
<keyword id="KW-0903">Direct protein sequencing</keyword>
<keyword id="KW-0378">Hydrolase</keyword>
<keyword id="KW-0479">Metal-binding</keyword>
<keyword id="KW-0482">Metalloprotease</keyword>
<keyword id="KW-0645">Protease</keyword>
<keyword id="KW-0677">Repeat</keyword>
<keyword id="KW-0964">Secreted</keyword>
<keyword id="KW-0862">Zinc</keyword>
<keyword id="KW-0865">Zymogen</keyword>
<gene>
    <name type="primary">prtG</name>
</gene>
<comment type="catalytic activity">
    <reaction>
        <text>Preferential cleavage of bonds with hydrophobic residues in P1'.</text>
        <dbReference type="EC" id="3.4.24.40"/>
    </reaction>
</comment>
<comment type="cofactor">
    <cofactor evidence="1">
        <name>Ca(2+)</name>
        <dbReference type="ChEBI" id="CHEBI:29108"/>
    </cofactor>
    <text evidence="1">Binds 7 Ca(2+) ions per subunit.</text>
</comment>
<comment type="cofactor">
    <cofactor evidence="1">
        <name>Zn(2+)</name>
        <dbReference type="ChEBI" id="CHEBI:29105"/>
    </cofactor>
    <text evidence="1">Binds 1 zinc ion per subunit.</text>
</comment>
<comment type="subcellular location">
    <subcellularLocation>
        <location>Secreted</location>
    </subcellularLocation>
</comment>
<comment type="domain">
    <text>The Gly-rich repeats may be important in the extracellular secretion of this metalloprotease.</text>
</comment>
<comment type="similarity">
    <text evidence="4">Belongs to the peptidase M10B family.</text>
</comment>
<reference key="1">
    <citation type="journal article" date="1992" name="Res. Microbiol.">
        <title>A fourth metalloprotease gene in Erwinia chrysanthemi.</title>
        <authorList>
            <person name="Ghigo J.-M."/>
            <person name="Wandersman C."/>
        </authorList>
    </citation>
    <scope>NUCLEOTIDE SEQUENCE [GENOMIC DNA]</scope>
    <scope>PROTEIN SEQUENCE OF N-TERMINUS</scope>
    <source>
        <strain>B374</strain>
    </source>
</reference>
<feature type="propeptide" id="PRO_0000028691" evidence="3">
    <location>
        <begin position="1"/>
        <end position="14"/>
    </location>
</feature>
<feature type="chain" id="PRO_0000028692" description="Serralysin G">
    <location>
        <begin position="15"/>
        <end position="475"/>
    </location>
</feature>
<feature type="repeat" description="Hemolysin-type calcium-binding 1">
    <location>
        <begin position="340"/>
        <end position="357"/>
    </location>
</feature>
<feature type="repeat" description="Hemolysin-type calcium-binding 2">
    <location>
        <begin position="358"/>
        <end position="375"/>
    </location>
</feature>
<feature type="active site" evidence="2">
    <location>
        <position position="187"/>
    </location>
</feature>
<feature type="binding site" evidence="2">
    <location>
        <position position="186"/>
    </location>
    <ligand>
        <name>Zn(2+)</name>
        <dbReference type="ChEBI" id="CHEBI:29105"/>
        <note>catalytic</note>
    </ligand>
</feature>
<feature type="binding site" evidence="2">
    <location>
        <position position="190"/>
    </location>
    <ligand>
        <name>Zn(2+)</name>
        <dbReference type="ChEBI" id="CHEBI:29105"/>
        <note>catalytic</note>
    </ligand>
</feature>
<feature type="binding site" evidence="2">
    <location>
        <position position="226"/>
    </location>
    <ligand>
        <name>Zn(2+)</name>
        <dbReference type="ChEBI" id="CHEBI:29105"/>
        <note>catalytic</note>
    </ligand>
</feature>
<feature type="binding site" evidence="1">
    <location>
        <position position="261"/>
    </location>
    <ligand>
        <name>Ca(2+)</name>
        <dbReference type="ChEBI" id="CHEBI:29108"/>
        <label>1</label>
    </ligand>
</feature>
<feature type="binding site" evidence="1">
    <location>
        <position position="263"/>
    </location>
    <ligand>
        <name>Ca(2+)</name>
        <dbReference type="ChEBI" id="CHEBI:29108"/>
        <label>1</label>
    </ligand>
</feature>
<feature type="binding site" evidence="1">
    <location>
        <position position="265"/>
    </location>
    <ligand>
        <name>Ca(2+)</name>
        <dbReference type="ChEBI" id="CHEBI:29108"/>
        <label>1</label>
    </ligand>
</feature>
<feature type="binding site" evidence="1">
    <location>
        <position position="293"/>
    </location>
    <ligand>
        <name>Ca(2+)</name>
        <dbReference type="ChEBI" id="CHEBI:29108"/>
        <label>1</label>
    </ligand>
</feature>
<feature type="binding site" evidence="1">
    <location>
        <position position="295"/>
    </location>
    <ligand>
        <name>Ca(2+)</name>
        <dbReference type="ChEBI" id="CHEBI:29108"/>
        <label>1</label>
    </ligand>
</feature>
<feature type="binding site" evidence="1">
    <location>
        <position position="296"/>
    </location>
    <ligand>
        <name>Ca(2+)</name>
        <dbReference type="ChEBI" id="CHEBI:29108"/>
        <label>2</label>
    </ligand>
</feature>
<feature type="binding site" evidence="1">
    <location>
        <position position="298"/>
    </location>
    <ligand>
        <name>Ca(2+)</name>
        <dbReference type="ChEBI" id="CHEBI:29108"/>
        <label>1</label>
    </ligand>
</feature>
<feature type="binding site" evidence="1">
    <location>
        <position position="298"/>
    </location>
    <ligand>
        <name>Ca(2+)</name>
        <dbReference type="ChEBI" id="CHEBI:29108"/>
        <label>2</label>
    </ligand>
</feature>
<feature type="binding site" evidence="1">
    <location>
        <position position="337"/>
    </location>
    <ligand>
        <name>Ca(2+)</name>
        <dbReference type="ChEBI" id="CHEBI:29108"/>
        <label>2</label>
    </ligand>
</feature>
<feature type="binding site" evidence="1">
    <location>
        <position position="342"/>
    </location>
    <ligand>
        <name>Ca(2+)</name>
        <dbReference type="ChEBI" id="CHEBI:29108"/>
        <label>3</label>
    </ligand>
</feature>
<feature type="binding site" evidence="1">
    <location>
        <position position="344"/>
    </location>
    <ligand>
        <name>Ca(2+)</name>
        <dbReference type="ChEBI" id="CHEBI:29108"/>
        <label>3</label>
    </ligand>
</feature>
<feature type="binding site" evidence="1">
    <location>
        <position position="346"/>
    </location>
    <ligand>
        <name>Ca(2+)</name>
        <dbReference type="ChEBI" id="CHEBI:29108"/>
        <label>3</label>
    </ligand>
</feature>
<feature type="binding site" evidence="1">
    <location>
        <position position="351"/>
    </location>
    <ligand>
        <name>Ca(2+)</name>
        <dbReference type="ChEBI" id="CHEBI:29108"/>
        <label>4</label>
    </ligand>
</feature>
<feature type="binding site" evidence="1">
    <location>
        <position position="355"/>
    </location>
    <ligand>
        <name>Ca(2+)</name>
        <dbReference type="ChEBI" id="CHEBI:29108"/>
        <label>4</label>
    </ligand>
</feature>
<feature type="binding site" evidence="1">
    <location>
        <position position="359"/>
    </location>
    <ligand>
        <name>Ca(2+)</name>
        <dbReference type="ChEBI" id="CHEBI:29108"/>
        <label>3</label>
    </ligand>
</feature>
<feature type="binding site" evidence="1">
    <location>
        <position position="360"/>
    </location>
    <ligand>
        <name>Ca(2+)</name>
        <dbReference type="ChEBI" id="CHEBI:29108"/>
        <label>5</label>
    </ligand>
</feature>
<feature type="binding site" evidence="1">
    <location>
        <position position="361"/>
    </location>
    <ligand>
        <name>Ca(2+)</name>
        <dbReference type="ChEBI" id="CHEBI:29108"/>
        <label>3</label>
    </ligand>
</feature>
<feature type="binding site" evidence="1">
    <location>
        <position position="362"/>
    </location>
    <ligand>
        <name>Ca(2+)</name>
        <dbReference type="ChEBI" id="CHEBI:29108"/>
        <label>5</label>
    </ligand>
</feature>
<feature type="binding site" evidence="1">
    <location>
        <position position="364"/>
    </location>
    <ligand>
        <name>Ca(2+)</name>
        <dbReference type="ChEBI" id="CHEBI:29108"/>
        <label>3</label>
    </ligand>
</feature>
<feature type="binding site" evidence="1">
    <location>
        <position position="364"/>
    </location>
    <ligand>
        <name>Ca(2+)</name>
        <dbReference type="ChEBI" id="CHEBI:29108"/>
        <label>5</label>
    </ligand>
</feature>
<feature type="binding site" evidence="1">
    <location>
        <position position="368"/>
    </location>
    <ligand>
        <name>Ca(2+)</name>
        <dbReference type="ChEBI" id="CHEBI:29108"/>
        <label>4</label>
    </ligand>
</feature>
<feature type="binding site" evidence="1">
    <location>
        <position position="370"/>
    </location>
    <ligand>
        <name>Ca(2+)</name>
        <dbReference type="ChEBI" id="CHEBI:29108"/>
        <label>4</label>
    </ligand>
</feature>
<feature type="binding site" evidence="1">
    <location>
        <position position="371"/>
    </location>
    <ligand>
        <name>Ca(2+)</name>
        <dbReference type="ChEBI" id="CHEBI:29108"/>
        <label>6</label>
    </ligand>
</feature>
<feature type="binding site" evidence="1">
    <location>
        <position position="373"/>
    </location>
    <ligand>
        <name>Ca(2+)</name>
        <dbReference type="ChEBI" id="CHEBI:29108"/>
        <label>4</label>
    </ligand>
</feature>
<feature type="binding site" evidence="1">
    <location>
        <position position="373"/>
    </location>
    <ligand>
        <name>Ca(2+)</name>
        <dbReference type="ChEBI" id="CHEBI:29108"/>
        <label>6</label>
    </ligand>
</feature>
<feature type="binding site" evidence="1">
    <location>
        <position position="377"/>
    </location>
    <ligand>
        <name>Ca(2+)</name>
        <dbReference type="ChEBI" id="CHEBI:29108"/>
        <label>5</label>
    </ligand>
</feature>
<feature type="binding site" evidence="1">
    <location>
        <position position="378"/>
    </location>
    <ligand>
        <name>Ca(2+)</name>
        <dbReference type="ChEBI" id="CHEBI:29108"/>
        <label>7</label>
    </ligand>
</feature>
<feature type="binding site" evidence="1">
    <location>
        <position position="379"/>
    </location>
    <ligand>
        <name>Ca(2+)</name>
        <dbReference type="ChEBI" id="CHEBI:29108"/>
        <label>5</label>
    </ligand>
</feature>
<feature type="binding site" evidence="1">
    <location>
        <position position="380"/>
    </location>
    <ligand>
        <name>Ca(2+)</name>
        <dbReference type="ChEBI" id="CHEBI:29108"/>
        <label>7</label>
    </ligand>
</feature>
<feature type="binding site" evidence="1">
    <location>
        <position position="382"/>
    </location>
    <ligand>
        <name>Ca(2+)</name>
        <dbReference type="ChEBI" id="CHEBI:29108"/>
        <label>5</label>
    </ligand>
</feature>
<feature type="binding site" evidence="1">
    <location>
        <position position="382"/>
    </location>
    <ligand>
        <name>Ca(2+)</name>
        <dbReference type="ChEBI" id="CHEBI:29108"/>
        <label>7</label>
    </ligand>
</feature>
<feature type="binding site" evidence="1">
    <location>
        <position position="391"/>
    </location>
    <ligand>
        <name>Ca(2+)</name>
        <dbReference type="ChEBI" id="CHEBI:29108"/>
        <label>6</label>
    </ligand>
</feature>
<feature type="binding site" evidence="1">
    <location>
        <position position="398"/>
    </location>
    <ligand>
        <name>Ca(2+)</name>
        <dbReference type="ChEBI" id="CHEBI:29108"/>
        <label>6</label>
    </ligand>
</feature>
<feature type="binding site" evidence="1">
    <location>
        <position position="408"/>
    </location>
    <ligand>
        <name>Ca(2+)</name>
        <dbReference type="ChEBI" id="CHEBI:29108"/>
        <label>7</label>
    </ligand>
</feature>
<proteinExistence type="evidence at protein level"/>